<feature type="chain" id="PRO_1000123840" description="ATP-dependent Clp protease ATP-binding subunit ClpX">
    <location>
        <begin position="1"/>
        <end position="423"/>
    </location>
</feature>
<feature type="domain" description="ClpX-type ZB" evidence="2">
    <location>
        <begin position="3"/>
        <end position="56"/>
    </location>
</feature>
<feature type="binding site" evidence="2">
    <location>
        <position position="15"/>
    </location>
    <ligand>
        <name>Zn(2+)</name>
        <dbReference type="ChEBI" id="CHEBI:29105"/>
    </ligand>
</feature>
<feature type="binding site" evidence="2">
    <location>
        <position position="18"/>
    </location>
    <ligand>
        <name>Zn(2+)</name>
        <dbReference type="ChEBI" id="CHEBI:29105"/>
    </ligand>
</feature>
<feature type="binding site" evidence="2">
    <location>
        <position position="37"/>
    </location>
    <ligand>
        <name>Zn(2+)</name>
        <dbReference type="ChEBI" id="CHEBI:29105"/>
    </ligand>
</feature>
<feature type="binding site" evidence="2">
    <location>
        <position position="40"/>
    </location>
    <ligand>
        <name>Zn(2+)</name>
        <dbReference type="ChEBI" id="CHEBI:29105"/>
    </ligand>
</feature>
<feature type="binding site" evidence="1">
    <location>
        <begin position="119"/>
        <end position="126"/>
    </location>
    <ligand>
        <name>ATP</name>
        <dbReference type="ChEBI" id="CHEBI:30616"/>
    </ligand>
</feature>
<reference key="1">
    <citation type="submission" date="2008-12" db="EMBL/GenBank/DDBJ databases">
        <title>Complete sequence of chromosome of Methylobacterium chloromethanicum CM4.</title>
        <authorList>
            <consortium name="US DOE Joint Genome Institute"/>
            <person name="Lucas S."/>
            <person name="Copeland A."/>
            <person name="Lapidus A."/>
            <person name="Glavina del Rio T."/>
            <person name="Dalin E."/>
            <person name="Tice H."/>
            <person name="Bruce D."/>
            <person name="Goodwin L."/>
            <person name="Pitluck S."/>
            <person name="Chertkov O."/>
            <person name="Brettin T."/>
            <person name="Detter J.C."/>
            <person name="Han C."/>
            <person name="Larimer F."/>
            <person name="Land M."/>
            <person name="Hauser L."/>
            <person name="Kyrpides N."/>
            <person name="Mikhailova N."/>
            <person name="Marx C."/>
            <person name="Richardson P."/>
        </authorList>
    </citation>
    <scope>NUCLEOTIDE SEQUENCE [LARGE SCALE GENOMIC DNA]</scope>
    <source>
        <strain>CM4 / NCIMB 13688</strain>
    </source>
</reference>
<comment type="function">
    <text evidence="1">ATP-dependent specificity component of the Clp protease. It directs the protease to specific substrates. Can perform chaperone functions in the absence of ClpP.</text>
</comment>
<comment type="subunit">
    <text evidence="1">Component of the ClpX-ClpP complex. Forms a hexameric ring that, in the presence of ATP, binds to fourteen ClpP subunits assembled into a disk-like structure with a central cavity, resembling the structure of eukaryotic proteasomes.</text>
</comment>
<comment type="similarity">
    <text evidence="1">Belongs to the ClpX chaperone family.</text>
</comment>
<sequence length="423" mass="46520">MSKTGGNDSKSTLYCSFCGKSQHEVRKLIAGPTVFICDECVELCMDIIREESKSSLVKSRDGVPTPKEIRRVLDDYVIGQDFAKKVLSVAVHNHYKRLAHATKHNDVELAKSNIMLIGPTGSGKTLLAQTLARILDVPFTMADATTLTEAGYVGEDVENIILKLLQASDYNVERAQRGIVYIDEIDKISRKSDNPSITRDVSGEGVQQALLKIMEGTVASVPPQGGRKHPQQEFLQVDTTNILFICGGAFAGLERIISQRGKGTSIGFGASVQAPDDRRTGEVFRSVEPEDLLKFGLIPEFVGRLPVLATLEDLDEEALKKILQEPKNALVKQYQRLFEMENVELTFQDEALSLVARKAIERKTGARGLRSILETILLDTMYDLPGLESVEQVVIGPEVVEGKSRPLFIHGDRNKEAPASVSA</sequence>
<protein>
    <recommendedName>
        <fullName evidence="1">ATP-dependent Clp protease ATP-binding subunit ClpX</fullName>
    </recommendedName>
</protein>
<organism>
    <name type="scientific">Methylorubrum extorquens (strain CM4 / NCIMB 13688)</name>
    <name type="common">Methylobacterium extorquens</name>
    <dbReference type="NCBI Taxonomy" id="440085"/>
    <lineage>
        <taxon>Bacteria</taxon>
        <taxon>Pseudomonadati</taxon>
        <taxon>Pseudomonadota</taxon>
        <taxon>Alphaproteobacteria</taxon>
        <taxon>Hyphomicrobiales</taxon>
        <taxon>Methylobacteriaceae</taxon>
        <taxon>Methylorubrum</taxon>
    </lineage>
</organism>
<accession>B7KNT1</accession>
<proteinExistence type="inferred from homology"/>
<gene>
    <name evidence="1" type="primary">clpX</name>
    <name type="ordered locus">Mchl_2680</name>
</gene>
<name>CLPX_METC4</name>
<dbReference type="EMBL" id="CP001298">
    <property type="protein sequence ID" value="ACK83520.1"/>
    <property type="molecule type" value="Genomic_DNA"/>
</dbReference>
<dbReference type="RefSeq" id="WP_003600394.1">
    <property type="nucleotide sequence ID" value="NC_011757.1"/>
</dbReference>
<dbReference type="SMR" id="B7KNT1"/>
<dbReference type="GeneID" id="72990088"/>
<dbReference type="KEGG" id="mch:Mchl_2680"/>
<dbReference type="HOGENOM" id="CLU_014218_8_2_5"/>
<dbReference type="Proteomes" id="UP000002385">
    <property type="component" value="Chromosome"/>
</dbReference>
<dbReference type="GO" id="GO:0009376">
    <property type="term" value="C:HslUV protease complex"/>
    <property type="evidence" value="ECO:0007669"/>
    <property type="project" value="TreeGrafter"/>
</dbReference>
<dbReference type="GO" id="GO:0005524">
    <property type="term" value="F:ATP binding"/>
    <property type="evidence" value="ECO:0007669"/>
    <property type="project" value="UniProtKB-UniRule"/>
</dbReference>
<dbReference type="GO" id="GO:0016887">
    <property type="term" value="F:ATP hydrolysis activity"/>
    <property type="evidence" value="ECO:0007669"/>
    <property type="project" value="InterPro"/>
</dbReference>
<dbReference type="GO" id="GO:0140662">
    <property type="term" value="F:ATP-dependent protein folding chaperone"/>
    <property type="evidence" value="ECO:0007669"/>
    <property type="project" value="InterPro"/>
</dbReference>
<dbReference type="GO" id="GO:0046983">
    <property type="term" value="F:protein dimerization activity"/>
    <property type="evidence" value="ECO:0007669"/>
    <property type="project" value="InterPro"/>
</dbReference>
<dbReference type="GO" id="GO:0051082">
    <property type="term" value="F:unfolded protein binding"/>
    <property type="evidence" value="ECO:0007669"/>
    <property type="project" value="UniProtKB-UniRule"/>
</dbReference>
<dbReference type="GO" id="GO:0008270">
    <property type="term" value="F:zinc ion binding"/>
    <property type="evidence" value="ECO:0007669"/>
    <property type="project" value="InterPro"/>
</dbReference>
<dbReference type="GO" id="GO:0051301">
    <property type="term" value="P:cell division"/>
    <property type="evidence" value="ECO:0007669"/>
    <property type="project" value="TreeGrafter"/>
</dbReference>
<dbReference type="GO" id="GO:0051603">
    <property type="term" value="P:proteolysis involved in protein catabolic process"/>
    <property type="evidence" value="ECO:0007669"/>
    <property type="project" value="TreeGrafter"/>
</dbReference>
<dbReference type="CDD" id="cd19497">
    <property type="entry name" value="RecA-like_ClpX"/>
    <property type="match status" value="1"/>
</dbReference>
<dbReference type="FunFam" id="1.10.8.60:FF:000002">
    <property type="entry name" value="ATP-dependent Clp protease ATP-binding subunit ClpX"/>
    <property type="match status" value="1"/>
</dbReference>
<dbReference type="FunFam" id="3.40.50.300:FF:000005">
    <property type="entry name" value="ATP-dependent Clp protease ATP-binding subunit ClpX"/>
    <property type="match status" value="1"/>
</dbReference>
<dbReference type="Gene3D" id="1.10.8.60">
    <property type="match status" value="1"/>
</dbReference>
<dbReference type="Gene3D" id="6.20.220.10">
    <property type="entry name" value="ClpX chaperone, C4-type zinc finger domain"/>
    <property type="match status" value="1"/>
</dbReference>
<dbReference type="Gene3D" id="3.40.50.300">
    <property type="entry name" value="P-loop containing nucleotide triphosphate hydrolases"/>
    <property type="match status" value="1"/>
</dbReference>
<dbReference type="HAMAP" id="MF_00175">
    <property type="entry name" value="ClpX"/>
    <property type="match status" value="1"/>
</dbReference>
<dbReference type="InterPro" id="IPR003593">
    <property type="entry name" value="AAA+_ATPase"/>
</dbReference>
<dbReference type="InterPro" id="IPR050052">
    <property type="entry name" value="ATP-dep_Clp_protease_ClpX"/>
</dbReference>
<dbReference type="InterPro" id="IPR003959">
    <property type="entry name" value="ATPase_AAA_core"/>
</dbReference>
<dbReference type="InterPro" id="IPR019489">
    <property type="entry name" value="Clp_ATPase_C"/>
</dbReference>
<dbReference type="InterPro" id="IPR004487">
    <property type="entry name" value="Clp_protease_ATP-bd_su_ClpX"/>
</dbReference>
<dbReference type="InterPro" id="IPR046425">
    <property type="entry name" value="ClpX_bact"/>
</dbReference>
<dbReference type="InterPro" id="IPR027417">
    <property type="entry name" value="P-loop_NTPase"/>
</dbReference>
<dbReference type="InterPro" id="IPR010603">
    <property type="entry name" value="Znf_CppX_C4"/>
</dbReference>
<dbReference type="InterPro" id="IPR038366">
    <property type="entry name" value="Znf_CppX_C4_sf"/>
</dbReference>
<dbReference type="NCBIfam" id="TIGR00382">
    <property type="entry name" value="clpX"/>
    <property type="match status" value="1"/>
</dbReference>
<dbReference type="NCBIfam" id="NF003745">
    <property type="entry name" value="PRK05342.1"/>
    <property type="match status" value="1"/>
</dbReference>
<dbReference type="PANTHER" id="PTHR48102:SF7">
    <property type="entry name" value="ATP-DEPENDENT CLP PROTEASE ATP-BINDING SUBUNIT CLPX-LIKE, MITOCHONDRIAL"/>
    <property type="match status" value="1"/>
</dbReference>
<dbReference type="PANTHER" id="PTHR48102">
    <property type="entry name" value="ATP-DEPENDENT CLP PROTEASE ATP-BINDING SUBUNIT CLPX-LIKE, MITOCHONDRIAL-RELATED"/>
    <property type="match status" value="1"/>
</dbReference>
<dbReference type="Pfam" id="PF07724">
    <property type="entry name" value="AAA_2"/>
    <property type="match status" value="1"/>
</dbReference>
<dbReference type="Pfam" id="PF10431">
    <property type="entry name" value="ClpB_D2-small"/>
    <property type="match status" value="1"/>
</dbReference>
<dbReference type="Pfam" id="PF06689">
    <property type="entry name" value="zf-C4_ClpX"/>
    <property type="match status" value="1"/>
</dbReference>
<dbReference type="SMART" id="SM00382">
    <property type="entry name" value="AAA"/>
    <property type="match status" value="1"/>
</dbReference>
<dbReference type="SMART" id="SM01086">
    <property type="entry name" value="ClpB_D2-small"/>
    <property type="match status" value="1"/>
</dbReference>
<dbReference type="SMART" id="SM00994">
    <property type="entry name" value="zf-C4_ClpX"/>
    <property type="match status" value="1"/>
</dbReference>
<dbReference type="SUPFAM" id="SSF57716">
    <property type="entry name" value="Glucocorticoid receptor-like (DNA-binding domain)"/>
    <property type="match status" value="1"/>
</dbReference>
<dbReference type="SUPFAM" id="SSF52540">
    <property type="entry name" value="P-loop containing nucleoside triphosphate hydrolases"/>
    <property type="match status" value="1"/>
</dbReference>
<dbReference type="PROSITE" id="PS51902">
    <property type="entry name" value="CLPX_ZB"/>
    <property type="match status" value="1"/>
</dbReference>
<evidence type="ECO:0000255" key="1">
    <source>
        <dbReference type="HAMAP-Rule" id="MF_00175"/>
    </source>
</evidence>
<evidence type="ECO:0000255" key="2">
    <source>
        <dbReference type="PROSITE-ProRule" id="PRU01250"/>
    </source>
</evidence>
<keyword id="KW-0067">ATP-binding</keyword>
<keyword id="KW-0143">Chaperone</keyword>
<keyword id="KW-0479">Metal-binding</keyword>
<keyword id="KW-0547">Nucleotide-binding</keyword>
<keyword id="KW-0862">Zinc</keyword>